<name>DEOB_SHIBS</name>
<protein>
    <recommendedName>
        <fullName evidence="1">Phosphopentomutase</fullName>
        <ecNumber evidence="1">5.4.2.7</ecNumber>
    </recommendedName>
    <alternativeName>
        <fullName evidence="1">Phosphodeoxyribomutase</fullName>
    </alternativeName>
</protein>
<comment type="function">
    <text evidence="1">Isomerase that catalyzes the conversion of deoxy-ribose 1-phosphate (dRib-1-P) and ribose 1-phosphate (Rib-1-P) to deoxy-ribose 5-phosphate (dRib-5-P) and ribose 5-phosphate (Rib-5-P), respectively.</text>
</comment>
<comment type="catalytic activity">
    <reaction evidence="1">
        <text>2-deoxy-alpha-D-ribose 1-phosphate = 2-deoxy-D-ribose 5-phosphate</text>
        <dbReference type="Rhea" id="RHEA:27658"/>
        <dbReference type="ChEBI" id="CHEBI:57259"/>
        <dbReference type="ChEBI" id="CHEBI:62877"/>
        <dbReference type="EC" id="5.4.2.7"/>
    </reaction>
</comment>
<comment type="catalytic activity">
    <reaction evidence="1">
        <text>alpha-D-ribose 1-phosphate = D-ribose 5-phosphate</text>
        <dbReference type="Rhea" id="RHEA:18793"/>
        <dbReference type="ChEBI" id="CHEBI:57720"/>
        <dbReference type="ChEBI" id="CHEBI:78346"/>
        <dbReference type="EC" id="5.4.2.7"/>
    </reaction>
</comment>
<comment type="cofactor">
    <cofactor evidence="1">
        <name>Mn(2+)</name>
        <dbReference type="ChEBI" id="CHEBI:29035"/>
    </cofactor>
    <text evidence="1">Binds 2 manganese ions.</text>
</comment>
<comment type="pathway">
    <text evidence="1">Carbohydrate degradation; 2-deoxy-D-ribose 1-phosphate degradation; D-glyceraldehyde 3-phosphate and acetaldehyde from 2-deoxy-alpha-D-ribose 1-phosphate: step 1/2.</text>
</comment>
<comment type="subcellular location">
    <subcellularLocation>
        <location evidence="1">Cytoplasm</location>
    </subcellularLocation>
</comment>
<comment type="similarity">
    <text evidence="1">Belongs to the phosphopentomutase family.</text>
</comment>
<accession>Q31SV6</accession>
<evidence type="ECO:0000255" key="1">
    <source>
        <dbReference type="HAMAP-Rule" id="MF_00740"/>
    </source>
</evidence>
<dbReference type="EC" id="5.4.2.7" evidence="1"/>
<dbReference type="EMBL" id="CP000036">
    <property type="protein sequence ID" value="ABB68852.1"/>
    <property type="molecule type" value="Genomic_DNA"/>
</dbReference>
<dbReference type="RefSeq" id="WP_000816471.1">
    <property type="nucleotide sequence ID" value="NC_007613.1"/>
</dbReference>
<dbReference type="SMR" id="Q31SV6"/>
<dbReference type="GeneID" id="89519362"/>
<dbReference type="KEGG" id="sbo:SBO_4445"/>
<dbReference type="HOGENOM" id="CLU_053861_0_0_6"/>
<dbReference type="UniPathway" id="UPA00002">
    <property type="reaction ID" value="UER00467"/>
</dbReference>
<dbReference type="Proteomes" id="UP000007067">
    <property type="component" value="Chromosome"/>
</dbReference>
<dbReference type="GO" id="GO:0005829">
    <property type="term" value="C:cytosol"/>
    <property type="evidence" value="ECO:0007669"/>
    <property type="project" value="TreeGrafter"/>
</dbReference>
<dbReference type="GO" id="GO:0000287">
    <property type="term" value="F:magnesium ion binding"/>
    <property type="evidence" value="ECO:0007669"/>
    <property type="project" value="InterPro"/>
</dbReference>
<dbReference type="GO" id="GO:0030145">
    <property type="term" value="F:manganese ion binding"/>
    <property type="evidence" value="ECO:0007669"/>
    <property type="project" value="UniProtKB-UniRule"/>
</dbReference>
<dbReference type="GO" id="GO:0008973">
    <property type="term" value="F:phosphopentomutase activity"/>
    <property type="evidence" value="ECO:0007669"/>
    <property type="project" value="UniProtKB-UniRule"/>
</dbReference>
<dbReference type="GO" id="GO:0006018">
    <property type="term" value="P:2-deoxyribose 1-phosphate catabolic process"/>
    <property type="evidence" value="ECO:0007669"/>
    <property type="project" value="UniProtKB-UniRule"/>
</dbReference>
<dbReference type="GO" id="GO:0006015">
    <property type="term" value="P:5-phosphoribose 1-diphosphate biosynthetic process"/>
    <property type="evidence" value="ECO:0007669"/>
    <property type="project" value="UniProtKB-UniPathway"/>
</dbReference>
<dbReference type="GO" id="GO:0043094">
    <property type="term" value="P:metabolic compound salvage"/>
    <property type="evidence" value="ECO:0007669"/>
    <property type="project" value="InterPro"/>
</dbReference>
<dbReference type="GO" id="GO:0009117">
    <property type="term" value="P:nucleotide metabolic process"/>
    <property type="evidence" value="ECO:0007669"/>
    <property type="project" value="InterPro"/>
</dbReference>
<dbReference type="CDD" id="cd16009">
    <property type="entry name" value="PPM"/>
    <property type="match status" value="1"/>
</dbReference>
<dbReference type="FunFam" id="3.30.70.1250:FF:000001">
    <property type="entry name" value="Phosphopentomutase"/>
    <property type="match status" value="1"/>
</dbReference>
<dbReference type="Gene3D" id="3.40.720.10">
    <property type="entry name" value="Alkaline Phosphatase, subunit A"/>
    <property type="match status" value="1"/>
</dbReference>
<dbReference type="Gene3D" id="3.30.70.1250">
    <property type="entry name" value="Phosphopentomutase"/>
    <property type="match status" value="1"/>
</dbReference>
<dbReference type="HAMAP" id="MF_00740">
    <property type="entry name" value="Phosphopentomut"/>
    <property type="match status" value="1"/>
</dbReference>
<dbReference type="InterPro" id="IPR017850">
    <property type="entry name" value="Alkaline_phosphatase_core_sf"/>
</dbReference>
<dbReference type="InterPro" id="IPR010045">
    <property type="entry name" value="DeoB"/>
</dbReference>
<dbReference type="InterPro" id="IPR006124">
    <property type="entry name" value="Metalloenzyme"/>
</dbReference>
<dbReference type="InterPro" id="IPR024052">
    <property type="entry name" value="Phosphopentomutase_DeoB_cap_sf"/>
</dbReference>
<dbReference type="NCBIfam" id="TIGR01696">
    <property type="entry name" value="deoB"/>
    <property type="match status" value="1"/>
</dbReference>
<dbReference type="NCBIfam" id="NF003766">
    <property type="entry name" value="PRK05362.1"/>
    <property type="match status" value="1"/>
</dbReference>
<dbReference type="PANTHER" id="PTHR21110">
    <property type="entry name" value="PHOSPHOPENTOMUTASE"/>
    <property type="match status" value="1"/>
</dbReference>
<dbReference type="PANTHER" id="PTHR21110:SF0">
    <property type="entry name" value="PHOSPHOPENTOMUTASE"/>
    <property type="match status" value="1"/>
</dbReference>
<dbReference type="Pfam" id="PF01676">
    <property type="entry name" value="Metalloenzyme"/>
    <property type="match status" value="1"/>
</dbReference>
<dbReference type="PIRSF" id="PIRSF001491">
    <property type="entry name" value="Ppentomutase"/>
    <property type="match status" value="1"/>
</dbReference>
<dbReference type="SUPFAM" id="SSF53649">
    <property type="entry name" value="Alkaline phosphatase-like"/>
    <property type="match status" value="1"/>
</dbReference>
<dbReference type="SUPFAM" id="SSF143856">
    <property type="entry name" value="DeoB insert domain-like"/>
    <property type="match status" value="1"/>
</dbReference>
<feature type="chain" id="PRO_0000258303" description="Phosphopentomutase">
    <location>
        <begin position="1"/>
        <end position="407"/>
    </location>
</feature>
<feature type="binding site" evidence="1">
    <location>
        <position position="10"/>
    </location>
    <ligand>
        <name>Mn(2+)</name>
        <dbReference type="ChEBI" id="CHEBI:29035"/>
        <label>1</label>
    </ligand>
</feature>
<feature type="binding site" evidence="1">
    <location>
        <position position="306"/>
    </location>
    <ligand>
        <name>Mn(2+)</name>
        <dbReference type="ChEBI" id="CHEBI:29035"/>
        <label>2</label>
    </ligand>
</feature>
<feature type="binding site" evidence="1">
    <location>
        <position position="311"/>
    </location>
    <ligand>
        <name>Mn(2+)</name>
        <dbReference type="ChEBI" id="CHEBI:29035"/>
        <label>2</label>
    </ligand>
</feature>
<feature type="binding site" evidence="1">
    <location>
        <position position="347"/>
    </location>
    <ligand>
        <name>Mn(2+)</name>
        <dbReference type="ChEBI" id="CHEBI:29035"/>
        <label>1</label>
    </ligand>
</feature>
<feature type="binding site" evidence="1">
    <location>
        <position position="348"/>
    </location>
    <ligand>
        <name>Mn(2+)</name>
        <dbReference type="ChEBI" id="CHEBI:29035"/>
        <label>1</label>
    </ligand>
</feature>
<feature type="binding site" evidence="1">
    <location>
        <position position="359"/>
    </location>
    <ligand>
        <name>Mn(2+)</name>
        <dbReference type="ChEBI" id="CHEBI:29035"/>
        <label>2</label>
    </ligand>
</feature>
<keyword id="KW-0963">Cytoplasm</keyword>
<keyword id="KW-0413">Isomerase</keyword>
<keyword id="KW-0464">Manganese</keyword>
<keyword id="KW-0479">Metal-binding</keyword>
<sequence length="407" mass="44370">MKRAFIMVLDSFGIGATEDAERFGDVGADTLGHIAEACAKGEADNGRKGPLNLPNLTRLGLAKAHEGSTGFIPAGMDGNAEVIGAYAWAHEMSSGKDTPSGHWEIAGVPVLFEWGYFSDHENSFPQELLDKLVERANLPGYLGNCHSSGTVILDQLGEEHMKTGKPIFYTSADSVFQIACHEETFGLDKLYELCEIAREELTNGGYNIGRVIARPFIGDKAGNFQRTGNRHDLAVEPPAPTVLQKLVDEKHGQVVSVGKIADIYANCGITKKVKATGLDALFDATIKEMKEAGDNTIVFTNFVDFDSSWGHRRDVAGYAAGLELFDRRLPELMSLLRDDDILILTADHGCDPTWTGTDHTREHIPVLVYGPKVKPGSLGHRETFADIGQTLAKYFGTSDMEYGKAMF</sequence>
<reference key="1">
    <citation type="journal article" date="2005" name="Nucleic Acids Res.">
        <title>Genome dynamics and diversity of Shigella species, the etiologic agents of bacillary dysentery.</title>
        <authorList>
            <person name="Yang F."/>
            <person name="Yang J."/>
            <person name="Zhang X."/>
            <person name="Chen L."/>
            <person name="Jiang Y."/>
            <person name="Yan Y."/>
            <person name="Tang X."/>
            <person name="Wang J."/>
            <person name="Xiong Z."/>
            <person name="Dong J."/>
            <person name="Xue Y."/>
            <person name="Zhu Y."/>
            <person name="Xu X."/>
            <person name="Sun L."/>
            <person name="Chen S."/>
            <person name="Nie H."/>
            <person name="Peng J."/>
            <person name="Xu J."/>
            <person name="Wang Y."/>
            <person name="Yuan Z."/>
            <person name="Wen Y."/>
            <person name="Yao Z."/>
            <person name="Shen Y."/>
            <person name="Qiang B."/>
            <person name="Hou Y."/>
            <person name="Yu J."/>
            <person name="Jin Q."/>
        </authorList>
    </citation>
    <scope>NUCLEOTIDE SEQUENCE [LARGE SCALE GENOMIC DNA]</scope>
    <source>
        <strain>Sb227</strain>
    </source>
</reference>
<gene>
    <name evidence="1" type="primary">deoB</name>
    <name type="ordered locus">SBO_4445</name>
</gene>
<organism>
    <name type="scientific">Shigella boydii serotype 4 (strain Sb227)</name>
    <dbReference type="NCBI Taxonomy" id="300268"/>
    <lineage>
        <taxon>Bacteria</taxon>
        <taxon>Pseudomonadati</taxon>
        <taxon>Pseudomonadota</taxon>
        <taxon>Gammaproteobacteria</taxon>
        <taxon>Enterobacterales</taxon>
        <taxon>Enterobacteriaceae</taxon>
        <taxon>Shigella</taxon>
    </lineage>
</organism>
<proteinExistence type="inferred from homology"/>